<feature type="chain" id="PRO_0000337504" description="Elongation factor Tu 1">
    <location>
        <begin position="1"/>
        <end position="401"/>
    </location>
</feature>
<feature type="domain" description="tr-type G">
    <location>
        <begin position="10"/>
        <end position="209"/>
    </location>
</feature>
<feature type="region of interest" description="G1" evidence="1">
    <location>
        <begin position="19"/>
        <end position="26"/>
    </location>
</feature>
<feature type="region of interest" description="G2" evidence="1">
    <location>
        <begin position="60"/>
        <end position="64"/>
    </location>
</feature>
<feature type="region of interest" description="G3" evidence="1">
    <location>
        <begin position="81"/>
        <end position="84"/>
    </location>
</feature>
<feature type="region of interest" description="G4" evidence="1">
    <location>
        <begin position="136"/>
        <end position="139"/>
    </location>
</feature>
<feature type="region of interest" description="G5" evidence="1">
    <location>
        <begin position="174"/>
        <end position="176"/>
    </location>
</feature>
<feature type="binding site" evidence="2">
    <location>
        <begin position="19"/>
        <end position="26"/>
    </location>
    <ligand>
        <name>GTP</name>
        <dbReference type="ChEBI" id="CHEBI:37565"/>
    </ligand>
</feature>
<feature type="binding site" evidence="2">
    <location>
        <position position="26"/>
    </location>
    <ligand>
        <name>Mg(2+)</name>
        <dbReference type="ChEBI" id="CHEBI:18420"/>
    </ligand>
</feature>
<feature type="binding site" evidence="2">
    <location>
        <begin position="81"/>
        <end position="85"/>
    </location>
    <ligand>
        <name>GTP</name>
        <dbReference type="ChEBI" id="CHEBI:37565"/>
    </ligand>
</feature>
<feature type="binding site" evidence="2">
    <location>
        <begin position="136"/>
        <end position="139"/>
    </location>
    <ligand>
        <name>GTP</name>
        <dbReference type="ChEBI" id="CHEBI:37565"/>
    </ligand>
</feature>
<organism>
    <name type="scientific">Roseiflexus sp. (strain RS-1)</name>
    <dbReference type="NCBI Taxonomy" id="357808"/>
    <lineage>
        <taxon>Bacteria</taxon>
        <taxon>Bacillati</taxon>
        <taxon>Chloroflexota</taxon>
        <taxon>Chloroflexia</taxon>
        <taxon>Chloroflexales</taxon>
        <taxon>Roseiflexineae</taxon>
        <taxon>Roseiflexaceae</taxon>
        <taxon>Roseiflexus</taxon>
    </lineage>
</organism>
<keyword id="KW-0963">Cytoplasm</keyword>
<keyword id="KW-0251">Elongation factor</keyword>
<keyword id="KW-0342">GTP-binding</keyword>
<keyword id="KW-0378">Hydrolase</keyword>
<keyword id="KW-0460">Magnesium</keyword>
<keyword id="KW-0479">Metal-binding</keyword>
<keyword id="KW-0547">Nucleotide-binding</keyword>
<keyword id="KW-0648">Protein biosynthesis</keyword>
<proteinExistence type="inferred from homology"/>
<accession>A5USJ1</accession>
<gene>
    <name evidence="2" type="primary">tuf1</name>
    <name type="ordered locus">RoseRS_1187</name>
</gene>
<protein>
    <recommendedName>
        <fullName evidence="2">Elongation factor Tu 1</fullName>
        <shortName evidence="2">EF-Tu 1</shortName>
        <ecNumber evidence="2">3.6.5.3</ecNumber>
    </recommendedName>
</protein>
<sequence>MAKQKFERTKPHVNVGTIGHVDHGKTTLTAAITKVLALQGAAQFVSYDQIDNAPEERARGITIAIRHVEYQTARRHYAHVDCPGHADYIKNMITGAAQMDGAILVVSAPDGPMPQTREHVLLARQVQVPAMVVFLNKVDMMDDEELLELVELELRELLSNHGFPGDEVPIVRGSALAALSSTSTDINAPEYKCILDLMNAVDEYIPTPVREIDKPFLMPIEDVFGIKGRGTVVTGRIERGKVKMGDTVEIIGMTHEAPRRTVVTGVEMFQKTLDEGIAGDNVGVLLRGIERTEVERGQVLAAPGSIKPHAKFKANVYVLKKEEGGRHTPFFSGYRPQFYIRTTDVTGAIHLPEGVEMVMPGDNIEMTVELIVPVAIEEGLRFAIREGGRTVGAGVVSAIVD</sequence>
<evidence type="ECO:0000250" key="1"/>
<evidence type="ECO:0000255" key="2">
    <source>
        <dbReference type="HAMAP-Rule" id="MF_00118"/>
    </source>
</evidence>
<dbReference type="EC" id="3.6.5.3" evidence="2"/>
<dbReference type="EMBL" id="CP000686">
    <property type="protein sequence ID" value="ABQ89594.1"/>
    <property type="molecule type" value="Genomic_DNA"/>
</dbReference>
<dbReference type="RefSeq" id="WP_011955947.1">
    <property type="nucleotide sequence ID" value="NC_009523.1"/>
</dbReference>
<dbReference type="SMR" id="A5USJ1"/>
<dbReference type="STRING" id="357808.RoseRS_1187"/>
<dbReference type="KEGG" id="rrs:RoseRS_1187"/>
<dbReference type="eggNOG" id="COG0050">
    <property type="taxonomic scope" value="Bacteria"/>
</dbReference>
<dbReference type="HOGENOM" id="CLU_007265_0_1_0"/>
<dbReference type="OrthoDB" id="9804504at2"/>
<dbReference type="Proteomes" id="UP000006554">
    <property type="component" value="Chromosome"/>
</dbReference>
<dbReference type="GO" id="GO:0005829">
    <property type="term" value="C:cytosol"/>
    <property type="evidence" value="ECO:0007669"/>
    <property type="project" value="TreeGrafter"/>
</dbReference>
<dbReference type="GO" id="GO:0005525">
    <property type="term" value="F:GTP binding"/>
    <property type="evidence" value="ECO:0007669"/>
    <property type="project" value="UniProtKB-UniRule"/>
</dbReference>
<dbReference type="GO" id="GO:0003924">
    <property type="term" value="F:GTPase activity"/>
    <property type="evidence" value="ECO:0007669"/>
    <property type="project" value="InterPro"/>
</dbReference>
<dbReference type="GO" id="GO:0003746">
    <property type="term" value="F:translation elongation factor activity"/>
    <property type="evidence" value="ECO:0007669"/>
    <property type="project" value="UniProtKB-UniRule"/>
</dbReference>
<dbReference type="CDD" id="cd01884">
    <property type="entry name" value="EF_Tu"/>
    <property type="match status" value="1"/>
</dbReference>
<dbReference type="CDD" id="cd03697">
    <property type="entry name" value="EFTU_II"/>
    <property type="match status" value="1"/>
</dbReference>
<dbReference type="CDD" id="cd03707">
    <property type="entry name" value="EFTU_III"/>
    <property type="match status" value="1"/>
</dbReference>
<dbReference type="FunFam" id="2.40.30.10:FF:000001">
    <property type="entry name" value="Elongation factor Tu"/>
    <property type="match status" value="1"/>
</dbReference>
<dbReference type="FunFam" id="3.40.50.300:FF:000003">
    <property type="entry name" value="Elongation factor Tu"/>
    <property type="match status" value="1"/>
</dbReference>
<dbReference type="Gene3D" id="3.40.50.300">
    <property type="entry name" value="P-loop containing nucleotide triphosphate hydrolases"/>
    <property type="match status" value="1"/>
</dbReference>
<dbReference type="Gene3D" id="2.40.30.10">
    <property type="entry name" value="Translation factors"/>
    <property type="match status" value="2"/>
</dbReference>
<dbReference type="HAMAP" id="MF_00118_B">
    <property type="entry name" value="EF_Tu_B"/>
    <property type="match status" value="1"/>
</dbReference>
<dbReference type="InterPro" id="IPR041709">
    <property type="entry name" value="EF-Tu_GTP-bd"/>
</dbReference>
<dbReference type="InterPro" id="IPR050055">
    <property type="entry name" value="EF-Tu_GTPase"/>
</dbReference>
<dbReference type="InterPro" id="IPR004161">
    <property type="entry name" value="EFTu-like_2"/>
</dbReference>
<dbReference type="InterPro" id="IPR033720">
    <property type="entry name" value="EFTU_2"/>
</dbReference>
<dbReference type="InterPro" id="IPR031157">
    <property type="entry name" value="G_TR_CS"/>
</dbReference>
<dbReference type="InterPro" id="IPR027417">
    <property type="entry name" value="P-loop_NTPase"/>
</dbReference>
<dbReference type="InterPro" id="IPR005225">
    <property type="entry name" value="Small_GTP-bd"/>
</dbReference>
<dbReference type="InterPro" id="IPR000795">
    <property type="entry name" value="T_Tr_GTP-bd_dom"/>
</dbReference>
<dbReference type="InterPro" id="IPR009000">
    <property type="entry name" value="Transl_B-barrel_sf"/>
</dbReference>
<dbReference type="InterPro" id="IPR009001">
    <property type="entry name" value="Transl_elong_EF1A/Init_IF2_C"/>
</dbReference>
<dbReference type="InterPro" id="IPR004541">
    <property type="entry name" value="Transl_elong_EFTu/EF1A_bac/org"/>
</dbReference>
<dbReference type="InterPro" id="IPR004160">
    <property type="entry name" value="Transl_elong_EFTu/EF1A_C"/>
</dbReference>
<dbReference type="NCBIfam" id="TIGR00485">
    <property type="entry name" value="EF-Tu"/>
    <property type="match status" value="1"/>
</dbReference>
<dbReference type="NCBIfam" id="NF000766">
    <property type="entry name" value="PRK00049.1"/>
    <property type="match status" value="1"/>
</dbReference>
<dbReference type="NCBIfam" id="NF009372">
    <property type="entry name" value="PRK12735.1"/>
    <property type="match status" value="1"/>
</dbReference>
<dbReference type="NCBIfam" id="NF009373">
    <property type="entry name" value="PRK12736.1"/>
    <property type="match status" value="1"/>
</dbReference>
<dbReference type="NCBIfam" id="TIGR00231">
    <property type="entry name" value="small_GTP"/>
    <property type="match status" value="1"/>
</dbReference>
<dbReference type="PANTHER" id="PTHR43721:SF22">
    <property type="entry name" value="ELONGATION FACTOR TU, MITOCHONDRIAL"/>
    <property type="match status" value="1"/>
</dbReference>
<dbReference type="PANTHER" id="PTHR43721">
    <property type="entry name" value="ELONGATION FACTOR TU-RELATED"/>
    <property type="match status" value="1"/>
</dbReference>
<dbReference type="Pfam" id="PF00009">
    <property type="entry name" value="GTP_EFTU"/>
    <property type="match status" value="1"/>
</dbReference>
<dbReference type="Pfam" id="PF03144">
    <property type="entry name" value="GTP_EFTU_D2"/>
    <property type="match status" value="1"/>
</dbReference>
<dbReference type="Pfam" id="PF03143">
    <property type="entry name" value="GTP_EFTU_D3"/>
    <property type="match status" value="1"/>
</dbReference>
<dbReference type="PRINTS" id="PR00315">
    <property type="entry name" value="ELONGATNFCT"/>
</dbReference>
<dbReference type="SUPFAM" id="SSF50465">
    <property type="entry name" value="EF-Tu/eEF-1alpha/eIF2-gamma C-terminal domain"/>
    <property type="match status" value="1"/>
</dbReference>
<dbReference type="SUPFAM" id="SSF52540">
    <property type="entry name" value="P-loop containing nucleoside triphosphate hydrolases"/>
    <property type="match status" value="1"/>
</dbReference>
<dbReference type="SUPFAM" id="SSF50447">
    <property type="entry name" value="Translation proteins"/>
    <property type="match status" value="1"/>
</dbReference>
<dbReference type="PROSITE" id="PS00301">
    <property type="entry name" value="G_TR_1"/>
    <property type="match status" value="1"/>
</dbReference>
<dbReference type="PROSITE" id="PS51722">
    <property type="entry name" value="G_TR_2"/>
    <property type="match status" value="1"/>
</dbReference>
<reference key="1">
    <citation type="submission" date="2007-04" db="EMBL/GenBank/DDBJ databases">
        <title>Complete sequence of Roseiflexus sp. RS-1.</title>
        <authorList>
            <consortium name="US DOE Joint Genome Institute"/>
            <person name="Copeland A."/>
            <person name="Lucas S."/>
            <person name="Lapidus A."/>
            <person name="Barry K."/>
            <person name="Detter J.C."/>
            <person name="Glavina del Rio T."/>
            <person name="Hammon N."/>
            <person name="Israni S."/>
            <person name="Dalin E."/>
            <person name="Tice H."/>
            <person name="Pitluck S."/>
            <person name="Chertkov O."/>
            <person name="Brettin T."/>
            <person name="Bruce D."/>
            <person name="Han C."/>
            <person name="Schmutz J."/>
            <person name="Larimer F."/>
            <person name="Land M."/>
            <person name="Hauser L."/>
            <person name="Kyrpides N."/>
            <person name="Mikhailova N."/>
            <person name="Bryant D.A."/>
            <person name="Richardson P."/>
        </authorList>
    </citation>
    <scope>NUCLEOTIDE SEQUENCE [LARGE SCALE GENOMIC DNA]</scope>
    <source>
        <strain>RS-1</strain>
    </source>
</reference>
<name>EFTU1_ROSS1</name>
<comment type="function">
    <text evidence="2">GTP hydrolase that promotes the GTP-dependent binding of aminoacyl-tRNA to the A-site of ribosomes during protein biosynthesis.</text>
</comment>
<comment type="catalytic activity">
    <reaction evidence="2">
        <text>GTP + H2O = GDP + phosphate + H(+)</text>
        <dbReference type="Rhea" id="RHEA:19669"/>
        <dbReference type="ChEBI" id="CHEBI:15377"/>
        <dbReference type="ChEBI" id="CHEBI:15378"/>
        <dbReference type="ChEBI" id="CHEBI:37565"/>
        <dbReference type="ChEBI" id="CHEBI:43474"/>
        <dbReference type="ChEBI" id="CHEBI:58189"/>
        <dbReference type="EC" id="3.6.5.3"/>
    </reaction>
    <physiologicalReaction direction="left-to-right" evidence="2">
        <dbReference type="Rhea" id="RHEA:19670"/>
    </physiologicalReaction>
</comment>
<comment type="subunit">
    <text evidence="2">Monomer.</text>
</comment>
<comment type="subcellular location">
    <subcellularLocation>
        <location evidence="2">Cytoplasm</location>
    </subcellularLocation>
</comment>
<comment type="similarity">
    <text evidence="2">Belongs to the TRAFAC class translation factor GTPase superfamily. Classic translation factor GTPase family. EF-Tu/EF-1A subfamily.</text>
</comment>